<dbReference type="EMBL" id="U43414">
    <property type="protein sequence ID" value="AAB38556.1"/>
    <property type="molecule type" value="Genomic_DNA"/>
</dbReference>
<dbReference type="EMBL" id="AE000793">
    <property type="status" value="NOT_ANNOTATED_CDS"/>
    <property type="molecule type" value="Genomic_DNA"/>
</dbReference>
<dbReference type="PIR" id="G70222">
    <property type="entry name" value="G70222"/>
</dbReference>
<dbReference type="RefSeq" id="WP_044283697.1">
    <property type="nucleotide sequence ID" value="NC_001849.2"/>
</dbReference>
<dbReference type="Proteomes" id="UP000001807">
    <property type="component" value="Plasmid lp17"/>
</dbReference>
<keyword id="KW-0614">Plasmid</keyword>
<keyword id="KW-1185">Reference proteome</keyword>
<protein>
    <recommendedName>
        <fullName>Uncharacterized protein BBD11</fullName>
    </recommendedName>
</protein>
<proteinExistence type="predicted"/>
<accession>P70838</accession>
<accession>O51004</accession>
<evidence type="ECO:0000305" key="1"/>
<sequence>MYTDPRSIINTYFVKNKKIFIINPIAFKFELNFEKIIQTNSKENIALKTFKGGIISLQLRSNELSKLPQDILKGKLEFYINYVSEEKLKIVYDMMVVKVYTIDLKAINKDEIYLIELKILGSIYRKENIENAFIPIIKNNNTYLFENKANNQKVNLLLKGIDKTIELPFLTKISYSNIKTLNTADIKTNENLNTNTKTTNRMLLNLSTKIYEELVLTNSNQIKTINNKQKILKTLRSFIENENGLGGKIKLIFLERTNFLIKNLNLNDLDFILNDINIIQENSCIRIDITLLEDKIEKKYLNQASNVTPFLKNITLL</sequence>
<feature type="chain" id="PRO_0000174424" description="Uncharacterized protein BBD11">
    <location>
        <begin position="1"/>
        <end position="317"/>
    </location>
</feature>
<feature type="sequence conflict" description="In Ref. 1; AAB38556." evidence="1" ref="1">
    <original>RIDITLLEDKIEKKYLNQASNVTPFLKNITLL</original>
    <variation>ESISPY</variation>
    <location>
        <begin position="286"/>
        <end position="317"/>
    </location>
</feature>
<reference key="1">
    <citation type="journal article" date="1996" name="J. Bacteriol.">
        <title>The nucleotide sequence of a linear plasmid of Borrelia burgdorferi reveals similarities to those of circular plasmids of other prokaryotes.</title>
        <authorList>
            <person name="Barbour A.G."/>
            <person name="Carter C.J."/>
            <person name="Bundoc V."/>
            <person name="Hinnebusch J."/>
        </authorList>
    </citation>
    <scope>NUCLEOTIDE SEQUENCE [GENOMIC DNA]</scope>
    <source>
        <strain>ATCC 35210 / DSM 4680 / CIP 102532 / B31</strain>
    </source>
</reference>
<reference key="2">
    <citation type="journal article" date="1997" name="Nature">
        <title>Genomic sequence of a Lyme disease spirochaete, Borrelia burgdorferi.</title>
        <authorList>
            <person name="Fraser C.M."/>
            <person name="Casjens S."/>
            <person name="Huang W.M."/>
            <person name="Sutton G.G."/>
            <person name="Clayton R.A."/>
            <person name="Lathigra R."/>
            <person name="White O."/>
            <person name="Ketchum K.A."/>
            <person name="Dodson R.J."/>
            <person name="Hickey E.K."/>
            <person name="Gwinn M.L."/>
            <person name="Dougherty B.A."/>
            <person name="Tomb J.-F."/>
            <person name="Fleischmann R.D."/>
            <person name="Richardson D.L."/>
            <person name="Peterson J.D."/>
            <person name="Kerlavage A.R."/>
            <person name="Quackenbush J."/>
            <person name="Salzberg S.L."/>
            <person name="Hanson M."/>
            <person name="van Vugt R."/>
            <person name="Palmer N."/>
            <person name="Adams M.D."/>
            <person name="Gocayne J.D."/>
            <person name="Weidman J.F."/>
            <person name="Utterback T.R."/>
            <person name="Watthey L."/>
            <person name="McDonald L.A."/>
            <person name="Artiach P."/>
            <person name="Bowman C."/>
            <person name="Garland S.A."/>
            <person name="Fujii C."/>
            <person name="Cotton M.D."/>
            <person name="Horst K."/>
            <person name="Roberts K.M."/>
            <person name="Hatch B."/>
            <person name="Smith H.O."/>
            <person name="Venter J.C."/>
        </authorList>
    </citation>
    <scope>NUCLEOTIDE SEQUENCE [LARGE SCALE GENOMIC DNA]</scope>
    <source>
        <strain>ATCC 35210 / DSM 4680 / CIP 102532 / B31</strain>
    </source>
</reference>
<geneLocation type="plasmid">
    <name>lp17 (linear 17 kb)</name>
    <name>lp16</name>
</geneLocation>
<gene>
    <name type="ordered locus">BB_D11</name>
    <name type="ORF">CdsH</name>
</gene>
<organism>
    <name type="scientific">Borreliella burgdorferi (strain ATCC 35210 / DSM 4680 / CIP 102532 / B31)</name>
    <name type="common">Borrelia burgdorferi</name>
    <dbReference type="NCBI Taxonomy" id="224326"/>
    <lineage>
        <taxon>Bacteria</taxon>
        <taxon>Pseudomonadati</taxon>
        <taxon>Spirochaetota</taxon>
        <taxon>Spirochaetia</taxon>
        <taxon>Spirochaetales</taxon>
        <taxon>Borreliaceae</taxon>
        <taxon>Borreliella</taxon>
    </lineage>
</organism>
<name>Y2811_BORBU</name>